<comment type="function">
    <text evidence="2">Binds to the N-acetyl-9-O-acetylneuraminic acid residues on the cell surface, bringing about the attachment of the virus particle to the cell. Plays a major role in the determination of host range restriction and virulence. Class I viral fusion protein. Responsible for penetration of the virus into the cell cytoplasm by mediating the fusion of the membrane of the endocytosed virus particle with the endosomal membrane. Low pH in endosomes induce an irreversible conformational change in HEF2, releasing the fusion hydrophobic peptide. Several trimers are required to form a competent fusion pore. Displays a receptor-destroying activity which is a neuraminidate-O-acetyl esterase. This activity cleaves off any receptor on the cell surface, which would otherwise prevent virions release. These cleavages prevent self-aggregation and ensure the efficient spread of the progeny virus from cell to cell.</text>
</comment>
<comment type="catalytic activity">
    <reaction evidence="2">
        <text>N-acetyl-9-O-acetylneuraminate + H2O = N-acetylneuraminate + acetate + H(+)</text>
        <dbReference type="Rhea" id="RHEA:22600"/>
        <dbReference type="ChEBI" id="CHEBI:15377"/>
        <dbReference type="ChEBI" id="CHEBI:15378"/>
        <dbReference type="ChEBI" id="CHEBI:28999"/>
        <dbReference type="ChEBI" id="CHEBI:30089"/>
        <dbReference type="ChEBI" id="CHEBI:35418"/>
        <dbReference type="EC" id="3.1.1.53"/>
    </reaction>
</comment>
<comment type="catalytic activity">
    <reaction evidence="2">
        <text>N-acetyl-4-O-acetylneuraminate + H2O = N-acetylneuraminate + acetate + H(+)</text>
        <dbReference type="Rhea" id="RHEA:25564"/>
        <dbReference type="ChEBI" id="CHEBI:15377"/>
        <dbReference type="ChEBI" id="CHEBI:15378"/>
        <dbReference type="ChEBI" id="CHEBI:29006"/>
        <dbReference type="ChEBI" id="CHEBI:30089"/>
        <dbReference type="ChEBI" id="CHEBI:35418"/>
        <dbReference type="EC" id="3.1.1.53"/>
    </reaction>
</comment>
<comment type="subunit">
    <text evidence="2">Homotrimer of disulfide-linked HEF1-HEF2.</text>
</comment>
<comment type="subcellular location">
    <subcellularLocation>
        <location evidence="2">Virion membrane</location>
        <topology evidence="2">Single-pass type I membrane protein</topology>
    </subcellularLocation>
    <subcellularLocation>
        <location evidence="2">Host cell membrane</location>
        <topology evidence="2">Single-pass type I membrane protein</topology>
    </subcellularLocation>
</comment>
<comment type="PTM">
    <text evidence="2">In natural infection, inactive HEF is matured into HEF1 and HEF2 outside the cell by one or more trypsin-like, arginine-specific endoprotease.</text>
</comment>
<comment type="similarity">
    <text evidence="2">Belongs to the influenza viruses hemagglutinin family.</text>
</comment>
<dbReference type="EC" id="3.1.1.53" evidence="2"/>
<dbReference type="EMBL" id="D63503">
    <property type="protein sequence ID" value="BAA09781.1"/>
    <property type="molecule type" value="Genomic_RNA"/>
</dbReference>
<dbReference type="SMR" id="P87691"/>
<dbReference type="GlyCosmos" id="P87691">
    <property type="glycosylation" value="7 sites, No reported glycans"/>
</dbReference>
<dbReference type="GO" id="GO:0020002">
    <property type="term" value="C:host cell plasma membrane"/>
    <property type="evidence" value="ECO:0007669"/>
    <property type="project" value="UniProtKB-SubCell"/>
</dbReference>
<dbReference type="GO" id="GO:0016020">
    <property type="term" value="C:membrane"/>
    <property type="evidence" value="ECO:0007669"/>
    <property type="project" value="UniProtKB-UniRule"/>
</dbReference>
<dbReference type="GO" id="GO:0019031">
    <property type="term" value="C:viral envelope"/>
    <property type="evidence" value="ECO:0007669"/>
    <property type="project" value="UniProtKB-UniRule"/>
</dbReference>
<dbReference type="GO" id="GO:0055036">
    <property type="term" value="C:virion membrane"/>
    <property type="evidence" value="ECO:0007669"/>
    <property type="project" value="UniProtKB-SubCell"/>
</dbReference>
<dbReference type="GO" id="GO:0046789">
    <property type="term" value="F:host cell surface receptor binding"/>
    <property type="evidence" value="ECO:0007669"/>
    <property type="project" value="UniProtKB-UniRule"/>
</dbReference>
<dbReference type="GO" id="GO:0106331">
    <property type="term" value="F:sialate 4-O-acetylesterase activity"/>
    <property type="evidence" value="ECO:0007669"/>
    <property type="project" value="RHEA"/>
</dbReference>
<dbReference type="GO" id="GO:0106330">
    <property type="term" value="F:sialate 9-O-acetylesterase activity"/>
    <property type="evidence" value="ECO:0007669"/>
    <property type="project" value="RHEA"/>
</dbReference>
<dbReference type="GO" id="GO:0075509">
    <property type="term" value="P:endocytosis involved in viral entry into host cell"/>
    <property type="evidence" value="ECO:0007669"/>
    <property type="project" value="UniProtKB-KW"/>
</dbReference>
<dbReference type="GO" id="GO:0039654">
    <property type="term" value="P:fusion of virus membrane with host endosome membrane"/>
    <property type="evidence" value="ECO:0007669"/>
    <property type="project" value="UniProtKB-UniRule"/>
</dbReference>
<dbReference type="GO" id="GO:0019064">
    <property type="term" value="P:fusion of virus membrane with host plasma membrane"/>
    <property type="evidence" value="ECO:0007669"/>
    <property type="project" value="InterPro"/>
</dbReference>
<dbReference type="GO" id="GO:0046761">
    <property type="term" value="P:viral budding from plasma membrane"/>
    <property type="evidence" value="ECO:0007669"/>
    <property type="project" value="UniProtKB-UniRule"/>
</dbReference>
<dbReference type="GO" id="GO:0019062">
    <property type="term" value="P:virion attachment to host cell"/>
    <property type="evidence" value="ECO:0007669"/>
    <property type="project" value="UniProtKB-KW"/>
</dbReference>
<dbReference type="Gene3D" id="2.20.70.20">
    <property type="match status" value="2"/>
</dbReference>
<dbReference type="Gene3D" id="3.90.20.10">
    <property type="match status" value="1"/>
</dbReference>
<dbReference type="HAMAP" id="MF_04072">
    <property type="entry name" value="INFV_HEMA"/>
    <property type="match status" value="1"/>
</dbReference>
<dbReference type="InterPro" id="IPR008980">
    <property type="entry name" value="Capsid_hemagglutn"/>
</dbReference>
<dbReference type="InterPro" id="IPR007142">
    <property type="entry name" value="Hemagglutn-estrase_core"/>
</dbReference>
<dbReference type="InterPro" id="IPR003860">
    <property type="entry name" value="Hemagglutn-estrase_hemagglutn"/>
</dbReference>
<dbReference type="InterPro" id="IPR001364">
    <property type="entry name" value="Hemagglutn_influenz_A/B"/>
</dbReference>
<dbReference type="InterPro" id="IPR014831">
    <property type="entry name" value="Hemagglutn_stalk_influenz-C"/>
</dbReference>
<dbReference type="Pfam" id="PF03996">
    <property type="entry name" value="Hema_esterase"/>
    <property type="match status" value="1"/>
</dbReference>
<dbReference type="Pfam" id="PF02710">
    <property type="entry name" value="Hema_HEFG"/>
    <property type="match status" value="1"/>
</dbReference>
<dbReference type="Pfam" id="PF08720">
    <property type="entry name" value="Hema_stalk"/>
    <property type="match status" value="1"/>
</dbReference>
<dbReference type="SUPFAM" id="SSF58064">
    <property type="entry name" value="Influenza hemagglutinin (stalk)"/>
    <property type="match status" value="1"/>
</dbReference>
<dbReference type="SUPFAM" id="SSF52266">
    <property type="entry name" value="SGNH hydrolase"/>
    <property type="match status" value="1"/>
</dbReference>
<dbReference type="SUPFAM" id="SSF49818">
    <property type="entry name" value="Viral protein domain"/>
    <property type="match status" value="1"/>
</dbReference>
<evidence type="ECO:0000250" key="1"/>
<evidence type="ECO:0000255" key="2">
    <source>
        <dbReference type="HAMAP-Rule" id="MF_04072"/>
    </source>
</evidence>
<reference key="1">
    <citation type="journal article" date="1992" name="Virology">
        <title>Selection of antigenically distinct variants of influenza C viruses by the host cell.</title>
        <authorList>
            <person name="Umetsu Y."/>
            <person name="Sugawara K."/>
            <person name="Nishimura H."/>
            <person name="Hongo S."/>
            <person name="Matsuzaki M."/>
            <person name="Kitame F."/>
            <person name="Nakamura K."/>
        </authorList>
    </citation>
    <scope>NUCLEOTIDE SEQUENCE [GENOMIC RNA]</scope>
</reference>
<name>HEMA_INCYB</name>
<organism>
    <name type="scientific">Influenza C virus (strain C/Yamagata/4/1988)</name>
    <dbReference type="NCBI Taxonomy" id="127958"/>
    <lineage>
        <taxon>Viruses</taxon>
        <taxon>Riboviria</taxon>
        <taxon>Orthornavirae</taxon>
        <taxon>Negarnaviricota</taxon>
        <taxon>Polyploviricotina</taxon>
        <taxon>Insthoviricetes</taxon>
        <taxon>Articulavirales</taxon>
        <taxon>Orthomyxoviridae</taxon>
        <taxon>Gammainfluenzavirus</taxon>
        <taxon>Gammainfluenzavirus influenzae</taxon>
        <taxon>Influenza C virus</taxon>
    </lineage>
</organism>
<protein>
    <recommendedName>
        <fullName evidence="2">Hemagglutinin-esterase-fusion glycoprotein</fullName>
        <shortName evidence="2">HEF</shortName>
        <ecNumber evidence="2">3.1.1.53</ecNumber>
    </recommendedName>
    <component>
        <recommendedName>
            <fullName evidence="2">Hemagglutinin-esterase-fusion glycoprotein chain 1</fullName>
            <shortName evidence="2">HEF1</shortName>
        </recommendedName>
    </component>
    <component>
        <recommendedName>
            <fullName evidence="2">Hemagglutinin-esterase-fusion glycoprotein chain 2</fullName>
            <shortName evidence="2">HEF2</shortName>
        </recommendedName>
    </component>
</protein>
<feature type="signal peptide" evidence="1">
    <location>
        <begin position="1"/>
        <end position="7"/>
    </location>
</feature>
<feature type="chain" id="PRO_0000039172" description="Hemagglutinin-esterase-fusion glycoprotein chain 1" evidence="2">
    <location>
        <begin position="8"/>
        <end position="439"/>
    </location>
</feature>
<feature type="chain" id="PRO_0000039173" description="Hemagglutinin-esterase-fusion glycoprotein chain 2" evidence="2">
    <location>
        <begin position="440"/>
        <end position="648"/>
    </location>
</feature>
<feature type="topological domain" description="Extracellular" evidence="2">
    <location>
        <begin position="8"/>
        <end position="623"/>
    </location>
</feature>
<feature type="transmembrane region" description="Helical" evidence="2">
    <location>
        <begin position="624"/>
        <end position="644"/>
    </location>
</feature>
<feature type="topological domain" description="Cytoplasmic" evidence="2">
    <location>
        <begin position="645"/>
        <end position="648"/>
    </location>
</feature>
<feature type="region of interest" description="Fusion domain-1" evidence="2">
    <location>
        <begin position="8"/>
        <end position="33"/>
    </location>
</feature>
<feature type="region of interest" description="Esterase domain-1" evidence="2">
    <location>
        <begin position="34"/>
        <end position="151"/>
    </location>
</feature>
<feature type="region of interest" description="N-acetyl-9-O-acetylneuraminic acid binding" evidence="2">
    <location>
        <begin position="151"/>
        <end position="303"/>
    </location>
</feature>
<feature type="region of interest" description="Esterase domain-2" evidence="2">
    <location>
        <begin position="303"/>
        <end position="357"/>
    </location>
</feature>
<feature type="region of interest" description="Fusion domain-2" evidence="2">
    <location>
        <begin position="358"/>
        <end position="643"/>
    </location>
</feature>
<feature type="active site" description="Nucleophile" evidence="2">
    <location>
        <position position="64"/>
    </location>
</feature>
<feature type="active site" description="Charge relay system" evidence="2">
    <location>
        <position position="359"/>
    </location>
</feature>
<feature type="active site" description="Charge relay system" evidence="2">
    <location>
        <position position="362"/>
    </location>
</feature>
<feature type="glycosylation site" description="N-linked (GlcNAc...) asparagine; by host" evidence="2">
    <location>
        <position position="19"/>
    </location>
</feature>
<feature type="glycosylation site" description="N-linked (GlcNAc...) asparagine; by host" evidence="2">
    <location>
        <position position="54"/>
    </location>
</feature>
<feature type="glycosylation site" description="N-linked (GlcNAc...) asparagine; by host" evidence="2">
    <location>
        <position position="137"/>
    </location>
</feature>
<feature type="glycosylation site" description="N-linked (GlcNAc...) asparagine; by host" evidence="2">
    <location>
        <position position="182"/>
    </location>
</feature>
<feature type="glycosylation site" description="N-linked (GlcNAc...) asparagine; by host" evidence="2">
    <location>
        <position position="388"/>
    </location>
</feature>
<feature type="glycosylation site" description="N-linked (GlcNAc...) asparagine; by host" evidence="2">
    <location>
        <position position="545"/>
    </location>
</feature>
<feature type="glycosylation site" description="N-linked (GlcNAc...) asparagine; by host" evidence="2">
    <location>
        <position position="596"/>
    </location>
</feature>
<feature type="disulfide bond" description="Interchain (between HEF1 and HEF2 chains)" evidence="2">
    <location>
        <begin position="13"/>
        <end position="576"/>
    </location>
</feature>
<feature type="disulfide bond" evidence="2">
    <location>
        <begin position="203"/>
        <end position="245"/>
    </location>
</feature>
<feature type="disulfide bond" evidence="2">
    <location>
        <begin position="222"/>
        <end position="309"/>
    </location>
</feature>
<feature type="disulfide bond" evidence="2">
    <location>
        <begin position="230"/>
        <end position="282"/>
    </location>
</feature>
<feature type="sequence variant" description="In HMV-II adapted variant.">
    <original>D</original>
    <variation>N</variation>
    <location>
        <position position="276"/>
    </location>
</feature>
<gene>
    <name evidence="2" type="primary">HE</name>
</gene>
<keyword id="KW-1015">Disulfide bond</keyword>
<keyword id="KW-1170">Fusion of virus membrane with host endosomal membrane</keyword>
<keyword id="KW-1168">Fusion of virus membrane with host membrane</keyword>
<keyword id="KW-0325">Glycoprotein</keyword>
<keyword id="KW-0348">Hemagglutinin</keyword>
<keyword id="KW-1032">Host cell membrane</keyword>
<keyword id="KW-1043">Host membrane</keyword>
<keyword id="KW-0945">Host-virus interaction</keyword>
<keyword id="KW-0378">Hydrolase</keyword>
<keyword id="KW-0472">Membrane</keyword>
<keyword id="KW-0732">Signal</keyword>
<keyword id="KW-0812">Transmembrane</keyword>
<keyword id="KW-1133">Transmembrane helix</keyword>
<keyword id="KW-1161">Viral attachment to host cell</keyword>
<keyword id="KW-0261">Viral envelope protein</keyword>
<keyword id="KW-1162">Viral penetration into host cytoplasm</keyword>
<keyword id="KW-0946">Virion</keyword>
<keyword id="KW-1164">Virus endocytosis by host</keyword>
<keyword id="KW-1160">Virus entry into host cell</keyword>
<accession>P87691</accession>
<sequence>MLGLTEAEKIKICLQKQVNSSFSLHNGFGGNLYATEEKRMFELVKPKAGASVLNQSTWIGFGDSRTDQSNSAFPRSADVSAKTADKFRSLSGGSLMLSMFGPPGKVDYLYQGCGKHKVFYEGVNWSPHAAIDCYRKNWTDIKLNFQKSIYELASQSHCMSLVNALDKTIPLQVTKGVAKNCNNSFLKNPALYTQEVKPLEQICGEENLAFFTLPTQFGTYECKLHLVASCYFIYDSKEVYNKRGCGNYFQVIYDSSGKVVGGLDNRVSPYTGNSGDTPTMQCDMLQLKPGRYSVRSSPRFLLMPERSYCFDMKEKGPVTAVQSIWGKGRESDTAVDQACSSTPGCMLIQKQKPYIGEADDHHGDQEMRELLSGLDYEARCISQSGWVNETSPFTEEYLLPPKFGRCPLAAKEESIPKIPDGLLIPTSGTDTTVTKPKSRIFGIDDLIIGLLFVAIVEAGIGGYLLGSRKESGGGVTKESAEKGFEKIGNDIQILRSSTNIAIEKLNDRISHDEQAIRDLTLEIENARSEALLGELGIIRALLVGNISIGLQESLWELASEITNRAGDLAVEVSPGCWIIDNNICDQSCQNFIFKFNETAPVPTIPPLDTKIDLQSDPFYWGSSLGLAITAAISLAALVISGIAICRTK</sequence>
<organismHost>
    <name type="scientific">Homo sapiens</name>
    <name type="common">Human</name>
    <dbReference type="NCBI Taxonomy" id="9606"/>
</organismHost>
<organismHost>
    <name type="scientific">Sus scrofa</name>
    <name type="common">Pig</name>
    <dbReference type="NCBI Taxonomy" id="9823"/>
</organismHost>
<proteinExistence type="inferred from homology"/>